<organism>
    <name type="scientific">Oenococcus oeni (strain ATCC BAA-331 / PSU-1)</name>
    <dbReference type="NCBI Taxonomy" id="203123"/>
    <lineage>
        <taxon>Bacteria</taxon>
        <taxon>Bacillati</taxon>
        <taxon>Bacillota</taxon>
        <taxon>Bacilli</taxon>
        <taxon>Lactobacillales</taxon>
        <taxon>Lactobacillaceae</taxon>
        <taxon>Oenococcus</taxon>
    </lineage>
</organism>
<comment type="function">
    <text evidence="1">Catalyzes the irreversible NADPH-dependent deamination of GMP to IMP. It functions in the conversion of nucleobase, nucleoside and nucleotide derivatives of G to A nucleotides, and in maintaining the intracellular balance of A and G nucleotides.</text>
</comment>
<comment type="catalytic activity">
    <reaction evidence="1">
        <text>IMP + NH4(+) + NADP(+) = GMP + NADPH + 2 H(+)</text>
        <dbReference type="Rhea" id="RHEA:17185"/>
        <dbReference type="ChEBI" id="CHEBI:15378"/>
        <dbReference type="ChEBI" id="CHEBI:28938"/>
        <dbReference type="ChEBI" id="CHEBI:57783"/>
        <dbReference type="ChEBI" id="CHEBI:58053"/>
        <dbReference type="ChEBI" id="CHEBI:58115"/>
        <dbReference type="ChEBI" id="CHEBI:58349"/>
        <dbReference type="EC" id="1.7.1.7"/>
    </reaction>
</comment>
<comment type="similarity">
    <text evidence="1">Belongs to the IMPDH/GMPR family. GuaC type 2 subfamily.</text>
</comment>
<feature type="chain" id="PRO_0000294279" description="GMP reductase">
    <location>
        <begin position="1"/>
        <end position="323"/>
    </location>
</feature>
<feature type="active site" description="Thioimidate intermediate" evidence="1">
    <location>
        <position position="174"/>
    </location>
</feature>
<feature type="binding site" evidence="1">
    <location>
        <begin position="203"/>
        <end position="226"/>
    </location>
    <ligand>
        <name>NADP(+)</name>
        <dbReference type="ChEBI" id="CHEBI:58349"/>
    </ligand>
</feature>
<proteinExistence type="inferred from homology"/>
<name>GUAC_OENOB</name>
<protein>
    <recommendedName>
        <fullName evidence="1">GMP reductase</fullName>
        <ecNumber evidence="1">1.7.1.7</ecNumber>
    </recommendedName>
    <alternativeName>
        <fullName evidence="1">Guanosine 5'-monophosphate oxidoreductase</fullName>
        <shortName evidence="1">Guanosine monophosphate reductase</shortName>
    </alternativeName>
</protein>
<dbReference type="EC" id="1.7.1.7" evidence="1"/>
<dbReference type="EMBL" id="CP000411">
    <property type="protein sequence ID" value="ABJ56483.1"/>
    <property type="molecule type" value="Genomic_DNA"/>
</dbReference>
<dbReference type="RefSeq" id="WP_002817212.1">
    <property type="nucleotide sequence ID" value="NC_008528.1"/>
</dbReference>
<dbReference type="SMR" id="Q04GD9"/>
<dbReference type="STRING" id="203123.OEOE_0535"/>
<dbReference type="KEGG" id="ooe:OEOE_0535"/>
<dbReference type="eggNOG" id="COG0516">
    <property type="taxonomic scope" value="Bacteria"/>
</dbReference>
<dbReference type="HOGENOM" id="CLU_022552_5_0_9"/>
<dbReference type="Proteomes" id="UP000000774">
    <property type="component" value="Chromosome"/>
</dbReference>
<dbReference type="GO" id="GO:0005829">
    <property type="term" value="C:cytosol"/>
    <property type="evidence" value="ECO:0007669"/>
    <property type="project" value="TreeGrafter"/>
</dbReference>
<dbReference type="GO" id="GO:1902560">
    <property type="term" value="C:GMP reductase complex"/>
    <property type="evidence" value="ECO:0007669"/>
    <property type="project" value="InterPro"/>
</dbReference>
<dbReference type="GO" id="GO:0003920">
    <property type="term" value="F:GMP reductase activity"/>
    <property type="evidence" value="ECO:0007669"/>
    <property type="project" value="UniProtKB-UniRule"/>
</dbReference>
<dbReference type="GO" id="GO:0006163">
    <property type="term" value="P:purine nucleotide metabolic process"/>
    <property type="evidence" value="ECO:0007669"/>
    <property type="project" value="UniProtKB-UniRule"/>
</dbReference>
<dbReference type="CDD" id="cd00381">
    <property type="entry name" value="IMPDH"/>
    <property type="match status" value="1"/>
</dbReference>
<dbReference type="FunFam" id="3.20.20.70:FF:000424">
    <property type="entry name" value="Inosine-5'-monophosphate dehydrogenase 2"/>
    <property type="match status" value="1"/>
</dbReference>
<dbReference type="Gene3D" id="3.20.20.70">
    <property type="entry name" value="Aldolase class I"/>
    <property type="match status" value="1"/>
</dbReference>
<dbReference type="HAMAP" id="MF_01511">
    <property type="entry name" value="GMP_reduct_type2"/>
    <property type="match status" value="1"/>
</dbReference>
<dbReference type="InterPro" id="IPR013785">
    <property type="entry name" value="Aldolase_TIM"/>
</dbReference>
<dbReference type="InterPro" id="IPR050139">
    <property type="entry name" value="GMP_reductase"/>
</dbReference>
<dbReference type="InterPro" id="IPR005994">
    <property type="entry name" value="GuaC_type_2"/>
</dbReference>
<dbReference type="InterPro" id="IPR015875">
    <property type="entry name" value="IMP_DH/GMP_Rdtase_CS"/>
</dbReference>
<dbReference type="InterPro" id="IPR001093">
    <property type="entry name" value="IMP_DH_GMPRt"/>
</dbReference>
<dbReference type="NCBIfam" id="TIGR01306">
    <property type="entry name" value="GMP_reduct_2"/>
    <property type="match status" value="1"/>
</dbReference>
<dbReference type="NCBIfam" id="NF003966">
    <property type="entry name" value="PRK05458.1"/>
    <property type="match status" value="1"/>
</dbReference>
<dbReference type="PANTHER" id="PTHR43170">
    <property type="entry name" value="GMP REDUCTASE"/>
    <property type="match status" value="1"/>
</dbReference>
<dbReference type="PANTHER" id="PTHR43170:SF5">
    <property type="entry name" value="GMP REDUCTASE"/>
    <property type="match status" value="1"/>
</dbReference>
<dbReference type="Pfam" id="PF00478">
    <property type="entry name" value="IMPDH"/>
    <property type="match status" value="1"/>
</dbReference>
<dbReference type="PIRSF" id="PIRSF036500">
    <property type="entry name" value="GMP_red_Firmic"/>
    <property type="match status" value="1"/>
</dbReference>
<dbReference type="SMART" id="SM01240">
    <property type="entry name" value="IMPDH"/>
    <property type="match status" value="1"/>
</dbReference>
<dbReference type="SUPFAM" id="SSF51412">
    <property type="entry name" value="Inosine monophosphate dehydrogenase (IMPDH)"/>
    <property type="match status" value="1"/>
</dbReference>
<dbReference type="PROSITE" id="PS00487">
    <property type="entry name" value="IMP_DH_GMP_RED"/>
    <property type="match status" value="1"/>
</dbReference>
<accession>Q04GD9</accession>
<keyword id="KW-0521">NADP</keyword>
<keyword id="KW-0560">Oxidoreductase</keyword>
<keyword id="KW-1185">Reference proteome</keyword>
<sequence>MEVFDYENVQLIPNKCLISSRSEADTSVEFGGHRFKLPVVPANMASVIDDKLAIWLAENGYFYIMHRFEPGKRFNFVTDMKQRGLISSISVGVKEEEYRLIDELVDAGLTPDYITIDIAHGYANTVIDMIHYIKKHLPKAFVVAGNIATPDAVRELEDAGADATKVGIGPGRACITKLKTGFGTAGWQLAAVRLCAKAARKPIIADGGIRHNGDIAKSVRFGASMVMIGSLFAGHKQSPGSDLVIDHRHYKQYYGSASAKQKGVYKNVEGKDLLVPYRGDIANTLNEMAQDLQSSISYAGGNNLQALRTVNYVIVQNTIMNGD</sequence>
<evidence type="ECO:0000255" key="1">
    <source>
        <dbReference type="HAMAP-Rule" id="MF_01511"/>
    </source>
</evidence>
<gene>
    <name evidence="1" type="primary">guaC</name>
    <name type="ordered locus">OEOE_0535</name>
</gene>
<reference key="1">
    <citation type="journal article" date="2006" name="Proc. Natl. Acad. Sci. U.S.A.">
        <title>Comparative genomics of the lactic acid bacteria.</title>
        <authorList>
            <person name="Makarova K.S."/>
            <person name="Slesarev A."/>
            <person name="Wolf Y.I."/>
            <person name="Sorokin A."/>
            <person name="Mirkin B."/>
            <person name="Koonin E.V."/>
            <person name="Pavlov A."/>
            <person name="Pavlova N."/>
            <person name="Karamychev V."/>
            <person name="Polouchine N."/>
            <person name="Shakhova V."/>
            <person name="Grigoriev I."/>
            <person name="Lou Y."/>
            <person name="Rohksar D."/>
            <person name="Lucas S."/>
            <person name="Huang K."/>
            <person name="Goodstein D.M."/>
            <person name="Hawkins T."/>
            <person name="Plengvidhya V."/>
            <person name="Welker D."/>
            <person name="Hughes J."/>
            <person name="Goh Y."/>
            <person name="Benson A."/>
            <person name="Baldwin K."/>
            <person name="Lee J.-H."/>
            <person name="Diaz-Muniz I."/>
            <person name="Dosti B."/>
            <person name="Smeianov V."/>
            <person name="Wechter W."/>
            <person name="Barabote R."/>
            <person name="Lorca G."/>
            <person name="Altermann E."/>
            <person name="Barrangou R."/>
            <person name="Ganesan B."/>
            <person name="Xie Y."/>
            <person name="Rawsthorne H."/>
            <person name="Tamir D."/>
            <person name="Parker C."/>
            <person name="Breidt F."/>
            <person name="Broadbent J.R."/>
            <person name="Hutkins R."/>
            <person name="O'Sullivan D."/>
            <person name="Steele J."/>
            <person name="Unlu G."/>
            <person name="Saier M.H. Jr."/>
            <person name="Klaenhammer T."/>
            <person name="Richardson P."/>
            <person name="Kozyavkin S."/>
            <person name="Weimer B.C."/>
            <person name="Mills D.A."/>
        </authorList>
    </citation>
    <scope>NUCLEOTIDE SEQUENCE [LARGE SCALE GENOMIC DNA]</scope>
    <source>
        <strain>ATCC BAA-331 / PSU-1</strain>
    </source>
</reference>